<accession>B7L9F8</accession>
<evidence type="ECO:0000255" key="1">
    <source>
        <dbReference type="HAMAP-Rule" id="MF_00770"/>
    </source>
</evidence>
<proteinExistence type="inferred from homology"/>
<organism>
    <name type="scientific">Escherichia coli (strain 55989 / EAEC)</name>
    <dbReference type="NCBI Taxonomy" id="585055"/>
    <lineage>
        <taxon>Bacteria</taxon>
        <taxon>Pseudomonadati</taxon>
        <taxon>Pseudomonadota</taxon>
        <taxon>Gammaproteobacteria</taxon>
        <taxon>Enterobacterales</taxon>
        <taxon>Enterobacteriaceae</taxon>
        <taxon>Escherichia</taxon>
    </lineage>
</organism>
<protein>
    <recommendedName>
        <fullName evidence="1">Rhamnulose-1-phosphate aldolase</fullName>
        <ecNumber evidence="1">4.1.2.19</ecNumber>
    </recommendedName>
</protein>
<name>RHAD_ECO55</name>
<keyword id="KW-0963">Cytoplasm</keyword>
<keyword id="KW-0456">Lyase</keyword>
<keyword id="KW-0479">Metal-binding</keyword>
<keyword id="KW-1185">Reference proteome</keyword>
<keyword id="KW-0684">Rhamnose metabolism</keyword>
<keyword id="KW-0862">Zinc</keyword>
<reference key="1">
    <citation type="journal article" date="2009" name="PLoS Genet.">
        <title>Organised genome dynamics in the Escherichia coli species results in highly diverse adaptive paths.</title>
        <authorList>
            <person name="Touchon M."/>
            <person name="Hoede C."/>
            <person name="Tenaillon O."/>
            <person name="Barbe V."/>
            <person name="Baeriswyl S."/>
            <person name="Bidet P."/>
            <person name="Bingen E."/>
            <person name="Bonacorsi S."/>
            <person name="Bouchier C."/>
            <person name="Bouvet O."/>
            <person name="Calteau A."/>
            <person name="Chiapello H."/>
            <person name="Clermont O."/>
            <person name="Cruveiller S."/>
            <person name="Danchin A."/>
            <person name="Diard M."/>
            <person name="Dossat C."/>
            <person name="Karoui M.E."/>
            <person name="Frapy E."/>
            <person name="Garry L."/>
            <person name="Ghigo J.M."/>
            <person name="Gilles A.M."/>
            <person name="Johnson J."/>
            <person name="Le Bouguenec C."/>
            <person name="Lescat M."/>
            <person name="Mangenot S."/>
            <person name="Martinez-Jehanne V."/>
            <person name="Matic I."/>
            <person name="Nassif X."/>
            <person name="Oztas S."/>
            <person name="Petit M.A."/>
            <person name="Pichon C."/>
            <person name="Rouy Z."/>
            <person name="Ruf C.S."/>
            <person name="Schneider D."/>
            <person name="Tourret J."/>
            <person name="Vacherie B."/>
            <person name="Vallenet D."/>
            <person name="Medigue C."/>
            <person name="Rocha E.P.C."/>
            <person name="Denamur E."/>
        </authorList>
    </citation>
    <scope>NUCLEOTIDE SEQUENCE [LARGE SCALE GENOMIC DNA]</scope>
    <source>
        <strain>55989 / EAEC</strain>
    </source>
</reference>
<dbReference type="EC" id="4.1.2.19" evidence="1"/>
<dbReference type="EMBL" id="CU928145">
    <property type="protein sequence ID" value="CAV01086.1"/>
    <property type="molecule type" value="Genomic_DNA"/>
</dbReference>
<dbReference type="RefSeq" id="WP_001179764.1">
    <property type="nucleotide sequence ID" value="NC_011748.1"/>
</dbReference>
<dbReference type="SMR" id="B7L9F8"/>
<dbReference type="GeneID" id="75204576"/>
<dbReference type="KEGG" id="eck:EC55989_4380"/>
<dbReference type="HOGENOM" id="CLU_076831_0_0_6"/>
<dbReference type="UniPathway" id="UPA00541">
    <property type="reaction ID" value="UER00603"/>
</dbReference>
<dbReference type="Proteomes" id="UP000000746">
    <property type="component" value="Chromosome"/>
</dbReference>
<dbReference type="GO" id="GO:0005829">
    <property type="term" value="C:cytosol"/>
    <property type="evidence" value="ECO:0007669"/>
    <property type="project" value="TreeGrafter"/>
</dbReference>
<dbReference type="GO" id="GO:0046872">
    <property type="term" value="F:metal ion binding"/>
    <property type="evidence" value="ECO:0007669"/>
    <property type="project" value="UniProtKB-KW"/>
</dbReference>
<dbReference type="GO" id="GO:0008994">
    <property type="term" value="F:rhamnulose-1-phosphate aldolase activity"/>
    <property type="evidence" value="ECO:0007669"/>
    <property type="project" value="UniProtKB-UniRule"/>
</dbReference>
<dbReference type="GO" id="GO:0019323">
    <property type="term" value="P:pentose catabolic process"/>
    <property type="evidence" value="ECO:0007669"/>
    <property type="project" value="TreeGrafter"/>
</dbReference>
<dbReference type="GO" id="GO:0019301">
    <property type="term" value="P:rhamnose catabolic process"/>
    <property type="evidence" value="ECO:0007669"/>
    <property type="project" value="UniProtKB-UniRule"/>
</dbReference>
<dbReference type="CDD" id="cd00398">
    <property type="entry name" value="Aldolase_II"/>
    <property type="match status" value="1"/>
</dbReference>
<dbReference type="FunFam" id="3.40.225.10:FF:000006">
    <property type="entry name" value="Rhamnulose-1-phosphate aldolase"/>
    <property type="match status" value="1"/>
</dbReference>
<dbReference type="Gene3D" id="3.40.225.10">
    <property type="entry name" value="Class II aldolase/adducin N-terminal domain"/>
    <property type="match status" value="1"/>
</dbReference>
<dbReference type="HAMAP" id="MF_00770">
    <property type="entry name" value="RhaD"/>
    <property type="match status" value="1"/>
</dbReference>
<dbReference type="InterPro" id="IPR050197">
    <property type="entry name" value="Aldolase_class_II_sugar_metab"/>
</dbReference>
<dbReference type="InterPro" id="IPR001303">
    <property type="entry name" value="Aldolase_II/adducin_N"/>
</dbReference>
<dbReference type="InterPro" id="IPR036409">
    <property type="entry name" value="Aldolase_II/adducin_N_sf"/>
</dbReference>
<dbReference type="InterPro" id="IPR013447">
    <property type="entry name" value="Rhamnulose-1-P_Aldolase"/>
</dbReference>
<dbReference type="NCBIfam" id="NF002963">
    <property type="entry name" value="PRK03634.1"/>
    <property type="match status" value="1"/>
</dbReference>
<dbReference type="NCBIfam" id="TIGR02624">
    <property type="entry name" value="rhamnu_1P_ald"/>
    <property type="match status" value="1"/>
</dbReference>
<dbReference type="PANTHER" id="PTHR22789">
    <property type="entry name" value="FUCULOSE PHOSPHATE ALDOLASE"/>
    <property type="match status" value="1"/>
</dbReference>
<dbReference type="PANTHER" id="PTHR22789:SF16">
    <property type="entry name" value="RHAMNULOSE-1-PHOSPHATE ALDOLASE"/>
    <property type="match status" value="1"/>
</dbReference>
<dbReference type="Pfam" id="PF00596">
    <property type="entry name" value="Aldolase_II"/>
    <property type="match status" value="1"/>
</dbReference>
<dbReference type="SMART" id="SM01007">
    <property type="entry name" value="Aldolase_II"/>
    <property type="match status" value="1"/>
</dbReference>
<dbReference type="SUPFAM" id="SSF53639">
    <property type="entry name" value="AraD/HMP-PK domain-like"/>
    <property type="match status" value="1"/>
</dbReference>
<comment type="function">
    <text evidence="1">Catalyzes the reversible cleavage of L-rhamnulose-1-phosphate to dihydroxyacetone phosphate (DHAP) and L-lactaldehyde.</text>
</comment>
<comment type="catalytic activity">
    <reaction evidence="1">
        <text>L-rhamnulose 1-phosphate = (S)-lactaldehyde + dihydroxyacetone phosphate</text>
        <dbReference type="Rhea" id="RHEA:19689"/>
        <dbReference type="ChEBI" id="CHEBI:18041"/>
        <dbReference type="ChEBI" id="CHEBI:57642"/>
        <dbReference type="ChEBI" id="CHEBI:58313"/>
        <dbReference type="EC" id="4.1.2.19"/>
    </reaction>
</comment>
<comment type="cofactor">
    <cofactor evidence="1">
        <name>Zn(2+)</name>
        <dbReference type="ChEBI" id="CHEBI:29105"/>
    </cofactor>
    <text evidence="1">Binds 1 zinc ion per subunit.</text>
</comment>
<comment type="pathway">
    <text evidence="1">Carbohydrate degradation; L-rhamnose degradation; glycerone phosphate from L-rhamnose: step 3/3.</text>
</comment>
<comment type="subunit">
    <text evidence="1">Homotetramer.</text>
</comment>
<comment type="subcellular location">
    <subcellularLocation>
        <location evidence="1">Cytoplasm</location>
    </subcellularLocation>
</comment>
<comment type="similarity">
    <text evidence="1">Belongs to the aldolase class II family. RhaD subfamily.</text>
</comment>
<gene>
    <name evidence="1" type="primary">rhaD</name>
    <name type="ordered locus">EC55989_4380</name>
</gene>
<feature type="chain" id="PRO_1000148449" description="Rhamnulose-1-phosphate aldolase">
    <location>
        <begin position="1"/>
        <end position="274"/>
    </location>
</feature>
<feature type="active site" evidence="1">
    <location>
        <position position="117"/>
    </location>
</feature>
<feature type="binding site" evidence="1">
    <location>
        <position position="141"/>
    </location>
    <ligand>
        <name>Zn(2+)</name>
        <dbReference type="ChEBI" id="CHEBI:29105"/>
    </ligand>
</feature>
<feature type="binding site" evidence="1">
    <location>
        <position position="143"/>
    </location>
    <ligand>
        <name>Zn(2+)</name>
        <dbReference type="ChEBI" id="CHEBI:29105"/>
    </ligand>
</feature>
<feature type="binding site" evidence="1">
    <location>
        <position position="212"/>
    </location>
    <ligand>
        <name>Zn(2+)</name>
        <dbReference type="ChEBI" id="CHEBI:29105"/>
    </ligand>
</feature>
<sequence length="274" mass="30055">MQNITQSWFVQGMIKATTDAWLKGWDERNGGNLTLRLDDADIAPYKDNFHAQPRYIPLSQPMPLLANTPFIVTGSGKFFRNVQLDPAANLGVVKVDSDGAGYHILWGLTNEAVPTSELPAHFLSHCERIKATNGKDRVIMHCHATNLIALTYVLENDTAVFTRQLWEGSTECLVVFPDGVGILPWMVPGTDEIGQATAQEMQKHSLVLWPFHGVFGSGSTLDETFGLIDTAEKSAQVLVKVYSMGGMKQTISREELIALGKRFGVTPLASALAL</sequence>